<proteinExistence type="inferred from homology"/>
<organismHost>
    <name type="scientific">Homo sapiens</name>
    <name type="common">Human</name>
    <dbReference type="NCBI Taxonomy" id="9606"/>
</organismHost>
<protein>
    <recommendedName>
        <fullName>Uncharacterized protein HVLF4</fullName>
    </recommendedName>
</protein>
<feature type="chain" id="PRO_0000115273" description="Uncharacterized protein HVLF4">
    <location>
        <begin position="1"/>
        <end position="310"/>
    </location>
</feature>
<feature type="transmembrane region" description="Helical" evidence="1">
    <location>
        <begin position="68"/>
        <end position="88"/>
    </location>
</feature>
<feature type="transmembrane region" description="Helical" evidence="1">
    <location>
        <begin position="101"/>
        <end position="121"/>
    </location>
</feature>
<feature type="transmembrane region" description="Helical" evidence="1">
    <location>
        <begin position="125"/>
        <end position="145"/>
    </location>
</feature>
<feature type="transmembrane region" description="Helical" evidence="1">
    <location>
        <begin position="147"/>
        <end position="167"/>
    </location>
</feature>
<feature type="transmembrane region" description="Helical" evidence="1">
    <location>
        <begin position="185"/>
        <end position="205"/>
    </location>
</feature>
<feature type="transmembrane region" description="Helical" evidence="1">
    <location>
        <begin position="208"/>
        <end position="228"/>
    </location>
</feature>
<feature type="transmembrane region" description="Helical" evidence="1">
    <location>
        <begin position="246"/>
        <end position="266"/>
    </location>
</feature>
<feature type="region of interest" description="Disordered" evidence="2">
    <location>
        <begin position="1"/>
        <end position="28"/>
    </location>
</feature>
<feature type="compositionally biased region" description="Low complexity" evidence="2">
    <location>
        <begin position="1"/>
        <end position="13"/>
    </location>
</feature>
<feature type="glycosylation site" description="N-linked (GlcNAc...) asparagine; by host" evidence="1">
    <location>
        <position position="291"/>
    </location>
</feature>
<feature type="glycosylation site" description="N-linked (GlcNAc...) asparagine; by host" evidence="1">
    <location>
        <position position="299"/>
    </location>
</feature>
<comment type="subcellular location">
    <subcellularLocation>
        <location evidence="3">Membrane</location>
        <topology evidence="3">Multi-pass membrane protein</topology>
    </subcellularLocation>
</comment>
<comment type="similarity">
    <text evidence="3">Belongs to the cytomegalovirus US12 family.</text>
</comment>
<gene>
    <name type="primary">US14</name>
</gene>
<organism>
    <name type="scientific">Human cytomegalovirus (strain AD169)</name>
    <name type="common">HHV-5</name>
    <name type="synonym">Human herpesvirus 5</name>
    <dbReference type="NCBI Taxonomy" id="10360"/>
    <lineage>
        <taxon>Viruses</taxon>
        <taxon>Duplodnaviria</taxon>
        <taxon>Heunggongvirae</taxon>
        <taxon>Peploviricota</taxon>
        <taxon>Herviviricetes</taxon>
        <taxon>Herpesvirales</taxon>
        <taxon>Orthoherpesviridae</taxon>
        <taxon>Betaherpesvirinae</taxon>
        <taxon>Cytomegalovirus</taxon>
        <taxon>Cytomegalovirus humanbeta5</taxon>
        <taxon>Human cytomegalovirus</taxon>
    </lineage>
</organism>
<keyword id="KW-0325">Glycoprotein</keyword>
<keyword id="KW-0472">Membrane</keyword>
<keyword id="KW-1185">Reference proteome</keyword>
<keyword id="KW-0812">Transmembrane</keyword>
<keyword id="KW-1133">Transmembrane helix</keyword>
<reference key="1">
    <citation type="journal article" date="1986" name="J. Mol. Biol.">
        <title>Sequence of the short unique region, short repeats, and part of the long repeats of human cytomegalovirus.</title>
        <authorList>
            <person name="Weston K.M."/>
            <person name="Barrell B.G."/>
        </authorList>
    </citation>
    <scope>NUCLEOTIDE SEQUENCE [GENOMIC DNA]</scope>
</reference>
<reference key="2">
    <citation type="journal article" date="1990" name="Curr. Top. Microbiol. Immunol.">
        <title>Analysis of the protein-coding content of the sequence of human cytomegalovirus strain AD169.</title>
        <authorList>
            <person name="Chee M.S."/>
            <person name="Bankier A.T."/>
            <person name="Beck S."/>
            <person name="Bohni R."/>
            <person name="Brown C.M."/>
            <person name="Cerny R."/>
            <person name="Horsnell T."/>
            <person name="Hutchison C.A. III"/>
            <person name="Kouzarides T."/>
            <person name="Martignetti J.A."/>
            <person name="Preddie E."/>
            <person name="Satchwell S.C."/>
            <person name="Tomlinson P."/>
            <person name="Weston K.M."/>
            <person name="Barrell B.G."/>
        </authorList>
    </citation>
    <scope>NUCLEOTIDE SEQUENCE [LARGE SCALE GENOMIC DNA]</scope>
</reference>
<reference key="3">
    <citation type="journal article" date="2003" name="J. Gen. Virol.">
        <title>The human cytomegalovirus genome revisited: comparison with the chimpanzee cytomegalovirus genome.</title>
        <authorList>
            <person name="Davison A.J."/>
            <person name="Dolan A."/>
            <person name="Akter P."/>
            <person name="Addison C."/>
            <person name="Dargan D.J."/>
            <person name="Alcendor D.J."/>
            <person name="McGeoch D.J."/>
            <person name="Hayward G.S."/>
        </authorList>
    </citation>
    <scope>GENOME REANNOTATION</scope>
</reference>
<reference key="4">
    <citation type="journal article" date="2003" name="J. Gen. Virol.">
        <authorList>
            <person name="Davison A.J."/>
            <person name="Dolan A."/>
            <person name="Akter P."/>
            <person name="Addison C."/>
            <person name="Dargan D.J."/>
            <person name="Alcendor D.J."/>
            <person name="McGeoch D.J."/>
            <person name="Hayward G.S."/>
        </authorList>
    </citation>
    <scope>ERRATUM OF PUBMED:12533697</scope>
</reference>
<sequence length="310" mass="34198">METVSTQRETASSETERTREAASAETTDATFRSLEEGSTISSRYSETASTVSEDAVCWLRRTAIVMRVYGLLTLETAFSVLISALVWLGYPSLGYKCSDDPSPLLLSCTPVLVLGALELTDHRHPSNGLVFALYVALLSFTTAGLNLCATAPIGISSLILTWTLFVACNGVAWEHRLSSVWRDALFTSTLLTVMVSVLASTYTWLHKTLLCLYTVFVGCILAVLFQDVRYIATKMPVSHVIRSSLILYATETLIYHTTLLMLTPVVWSARWDQMFSYLAKLGTYHHYLIDNGTLSVILNTTTATFQSKAA</sequence>
<accession>P09719</accession>
<accession>Q7M6I6</accession>
<evidence type="ECO:0000255" key="1"/>
<evidence type="ECO:0000256" key="2">
    <source>
        <dbReference type="SAM" id="MobiDB-lite"/>
    </source>
</evidence>
<evidence type="ECO:0000305" key="3"/>
<name>US14_HCMVA</name>
<dbReference type="EMBL" id="X17403">
    <property type="protein sequence ID" value="CAA35281.1"/>
    <property type="molecule type" value="Genomic_DNA"/>
</dbReference>
<dbReference type="EMBL" id="X04650">
    <property type="protein sequence ID" value="CAB37106.1"/>
    <property type="molecule type" value="Genomic_DNA"/>
</dbReference>
<dbReference type="EMBL" id="BK000394">
    <property type="protein sequence ID" value="DAA00202.1"/>
    <property type="molecule type" value="Genomic_DNA"/>
</dbReference>
<dbReference type="PIR" id="F27230">
    <property type="entry name" value="QQBEF6"/>
</dbReference>
<dbReference type="GlyCosmos" id="P09719">
    <property type="glycosylation" value="2 sites, No reported glycans"/>
</dbReference>
<dbReference type="Proteomes" id="UP000008991">
    <property type="component" value="Segment"/>
</dbReference>
<dbReference type="Proteomes" id="UP000008992">
    <property type="component" value="Segment"/>
</dbReference>
<dbReference type="GO" id="GO:0016020">
    <property type="term" value="C:membrane"/>
    <property type="evidence" value="ECO:0007669"/>
    <property type="project" value="UniProtKB-SubCell"/>
</dbReference>